<gene>
    <name type="ordered locus">BcerKBAB4_3669</name>
</gene>
<proteinExistence type="inferred from homology"/>
<organism>
    <name type="scientific">Bacillus mycoides (strain KBAB4)</name>
    <name type="common">Bacillus weihenstephanensis</name>
    <dbReference type="NCBI Taxonomy" id="315730"/>
    <lineage>
        <taxon>Bacteria</taxon>
        <taxon>Bacillati</taxon>
        <taxon>Bacillota</taxon>
        <taxon>Bacilli</taxon>
        <taxon>Bacillales</taxon>
        <taxon>Bacillaceae</taxon>
        <taxon>Bacillus</taxon>
        <taxon>Bacillus cereus group</taxon>
    </lineage>
</organism>
<comment type="function">
    <text evidence="1">Might take part in the signal recognition particle (SRP) pathway. This is inferred from the conservation of its genetic proximity to ftsY/ffh. May be a regulatory protein.</text>
</comment>
<comment type="similarity">
    <text evidence="1">Belongs to the UPF0122 family.</text>
</comment>
<evidence type="ECO:0000255" key="1">
    <source>
        <dbReference type="HAMAP-Rule" id="MF_00245"/>
    </source>
</evidence>
<sequence length="110" mass="13296">MLEKTTRMNYLFDFYQSLLTQKQRSYMSLYYLDDLSLGEIAEEFDVSRQAVYDNIKRTEAMLEEYEDKLVLLQKFQERQRLVAKLKQLLSEEEHVNEEMKQVVEAIEKLD</sequence>
<feature type="chain" id="PRO_1000100807" description="UPF0122 protein BcerKBAB4_3669">
    <location>
        <begin position="1"/>
        <end position="110"/>
    </location>
</feature>
<reference key="1">
    <citation type="journal article" date="2008" name="Chem. Biol. Interact.">
        <title>Extending the Bacillus cereus group genomics to putative food-borne pathogens of different toxicity.</title>
        <authorList>
            <person name="Lapidus A."/>
            <person name="Goltsman E."/>
            <person name="Auger S."/>
            <person name="Galleron N."/>
            <person name="Segurens B."/>
            <person name="Dossat C."/>
            <person name="Land M.L."/>
            <person name="Broussolle V."/>
            <person name="Brillard J."/>
            <person name="Guinebretiere M.-H."/>
            <person name="Sanchis V."/>
            <person name="Nguen-the C."/>
            <person name="Lereclus D."/>
            <person name="Richardson P."/>
            <person name="Wincker P."/>
            <person name="Weissenbach J."/>
            <person name="Ehrlich S.D."/>
            <person name="Sorokin A."/>
        </authorList>
    </citation>
    <scope>NUCLEOTIDE SEQUENCE [LARGE SCALE GENOMIC DNA]</scope>
    <source>
        <strain>KBAB4</strain>
    </source>
</reference>
<protein>
    <recommendedName>
        <fullName evidence="1">UPF0122 protein BcerKBAB4_3669</fullName>
    </recommendedName>
</protein>
<name>Y3669_BACMK</name>
<dbReference type="EMBL" id="CP000903">
    <property type="protein sequence ID" value="ABY44840.1"/>
    <property type="molecule type" value="Genomic_DNA"/>
</dbReference>
<dbReference type="RefSeq" id="WP_002033794.1">
    <property type="nucleotide sequence ID" value="NC_010184.1"/>
</dbReference>
<dbReference type="SMR" id="A9VT84"/>
<dbReference type="KEGG" id="bwe:BcerKBAB4_3669"/>
<dbReference type="eggNOG" id="COG2739">
    <property type="taxonomic scope" value="Bacteria"/>
</dbReference>
<dbReference type="HOGENOM" id="CLU_129218_1_0_9"/>
<dbReference type="Proteomes" id="UP000002154">
    <property type="component" value="Chromosome"/>
</dbReference>
<dbReference type="Gene3D" id="1.10.10.10">
    <property type="entry name" value="Winged helix-like DNA-binding domain superfamily/Winged helix DNA-binding domain"/>
    <property type="match status" value="1"/>
</dbReference>
<dbReference type="HAMAP" id="MF_00245">
    <property type="entry name" value="UPF0122"/>
    <property type="match status" value="1"/>
</dbReference>
<dbReference type="InterPro" id="IPR013324">
    <property type="entry name" value="RNA_pol_sigma_r3/r4-like"/>
</dbReference>
<dbReference type="InterPro" id="IPR007394">
    <property type="entry name" value="UPF0122"/>
</dbReference>
<dbReference type="InterPro" id="IPR054831">
    <property type="entry name" value="UPF0122_fam_protein"/>
</dbReference>
<dbReference type="InterPro" id="IPR036388">
    <property type="entry name" value="WH-like_DNA-bd_sf"/>
</dbReference>
<dbReference type="NCBIfam" id="NF001068">
    <property type="entry name" value="PRK00118.1-4"/>
    <property type="match status" value="1"/>
</dbReference>
<dbReference type="NCBIfam" id="NF001070">
    <property type="entry name" value="PRK00118.1-6"/>
    <property type="match status" value="1"/>
</dbReference>
<dbReference type="NCBIfam" id="NF045758">
    <property type="entry name" value="YlxM"/>
    <property type="match status" value="1"/>
</dbReference>
<dbReference type="PANTHER" id="PTHR40083">
    <property type="entry name" value="UPF0122 PROTEIN CBO2450/CLC_2298"/>
    <property type="match status" value="1"/>
</dbReference>
<dbReference type="PANTHER" id="PTHR40083:SF1">
    <property type="entry name" value="UPF0122 PROTEIN YLXM"/>
    <property type="match status" value="1"/>
</dbReference>
<dbReference type="Pfam" id="PF04297">
    <property type="entry name" value="UPF0122"/>
    <property type="match status" value="1"/>
</dbReference>
<dbReference type="SUPFAM" id="SSF88659">
    <property type="entry name" value="Sigma3 and sigma4 domains of RNA polymerase sigma factors"/>
    <property type="match status" value="1"/>
</dbReference>
<accession>A9VT84</accession>